<dbReference type="EMBL" id="CP000349">
    <property type="protein sequence ID" value="ABJ80545.1"/>
    <property type="molecule type" value="Genomic_DNA"/>
</dbReference>
<dbReference type="RefSeq" id="WP_002733336.1">
    <property type="nucleotide sequence ID" value="NC_008509.1"/>
</dbReference>
<dbReference type="SMR" id="Q04WK0"/>
<dbReference type="GeneID" id="61175504"/>
<dbReference type="KEGG" id="lbl:LBL_4234"/>
<dbReference type="HOGENOM" id="CLU_074944_0_1_12"/>
<dbReference type="UniPathway" id="UPA00345"/>
<dbReference type="GO" id="GO:0005737">
    <property type="term" value="C:cytoplasm"/>
    <property type="evidence" value="ECO:0007669"/>
    <property type="project" value="UniProtKB-SubCell"/>
</dbReference>
<dbReference type="GO" id="GO:0003746">
    <property type="term" value="F:translation elongation factor activity"/>
    <property type="evidence" value="ECO:0007669"/>
    <property type="project" value="UniProtKB-UniRule"/>
</dbReference>
<dbReference type="GO" id="GO:0043043">
    <property type="term" value="P:peptide biosynthetic process"/>
    <property type="evidence" value="ECO:0007669"/>
    <property type="project" value="InterPro"/>
</dbReference>
<dbReference type="CDD" id="cd04470">
    <property type="entry name" value="S1_EF-P_repeat_1"/>
    <property type="match status" value="1"/>
</dbReference>
<dbReference type="CDD" id="cd05794">
    <property type="entry name" value="S1_EF-P_repeat_2"/>
    <property type="match status" value="1"/>
</dbReference>
<dbReference type="FunFam" id="2.30.30.30:FF:000003">
    <property type="entry name" value="Elongation factor P"/>
    <property type="match status" value="1"/>
</dbReference>
<dbReference type="FunFam" id="2.40.50.140:FF:000004">
    <property type="entry name" value="Elongation factor P"/>
    <property type="match status" value="1"/>
</dbReference>
<dbReference type="FunFam" id="2.40.50.140:FF:000009">
    <property type="entry name" value="Elongation factor P"/>
    <property type="match status" value="1"/>
</dbReference>
<dbReference type="Gene3D" id="2.30.30.30">
    <property type="match status" value="1"/>
</dbReference>
<dbReference type="Gene3D" id="2.40.50.140">
    <property type="entry name" value="Nucleic acid-binding proteins"/>
    <property type="match status" value="2"/>
</dbReference>
<dbReference type="HAMAP" id="MF_00141">
    <property type="entry name" value="EF_P"/>
    <property type="match status" value="1"/>
</dbReference>
<dbReference type="InterPro" id="IPR015365">
    <property type="entry name" value="Elong-fact-P_C"/>
</dbReference>
<dbReference type="InterPro" id="IPR012340">
    <property type="entry name" value="NA-bd_OB-fold"/>
</dbReference>
<dbReference type="InterPro" id="IPR014722">
    <property type="entry name" value="Rib_uL2_dom2"/>
</dbReference>
<dbReference type="InterPro" id="IPR020599">
    <property type="entry name" value="Transl_elong_fac_P/YeiP"/>
</dbReference>
<dbReference type="InterPro" id="IPR013185">
    <property type="entry name" value="Transl_elong_KOW-like"/>
</dbReference>
<dbReference type="InterPro" id="IPR001059">
    <property type="entry name" value="Transl_elong_P/YeiP_cen"/>
</dbReference>
<dbReference type="InterPro" id="IPR013852">
    <property type="entry name" value="Transl_elong_P/YeiP_CS"/>
</dbReference>
<dbReference type="InterPro" id="IPR011768">
    <property type="entry name" value="Transl_elongation_fac_P"/>
</dbReference>
<dbReference type="InterPro" id="IPR008991">
    <property type="entry name" value="Translation_prot_SH3-like_sf"/>
</dbReference>
<dbReference type="NCBIfam" id="TIGR00038">
    <property type="entry name" value="efp"/>
    <property type="match status" value="1"/>
</dbReference>
<dbReference type="NCBIfam" id="NF001810">
    <property type="entry name" value="PRK00529.1"/>
    <property type="match status" value="1"/>
</dbReference>
<dbReference type="PANTHER" id="PTHR30053">
    <property type="entry name" value="ELONGATION FACTOR P"/>
    <property type="match status" value="1"/>
</dbReference>
<dbReference type="PANTHER" id="PTHR30053:SF12">
    <property type="entry name" value="ELONGATION FACTOR P (EF-P) FAMILY PROTEIN"/>
    <property type="match status" value="1"/>
</dbReference>
<dbReference type="Pfam" id="PF01132">
    <property type="entry name" value="EFP"/>
    <property type="match status" value="1"/>
</dbReference>
<dbReference type="Pfam" id="PF08207">
    <property type="entry name" value="EFP_N"/>
    <property type="match status" value="1"/>
</dbReference>
<dbReference type="Pfam" id="PF09285">
    <property type="entry name" value="Elong-fact-P_C"/>
    <property type="match status" value="1"/>
</dbReference>
<dbReference type="PIRSF" id="PIRSF005901">
    <property type="entry name" value="EF-P"/>
    <property type="match status" value="1"/>
</dbReference>
<dbReference type="SMART" id="SM01185">
    <property type="entry name" value="EFP"/>
    <property type="match status" value="1"/>
</dbReference>
<dbReference type="SMART" id="SM00841">
    <property type="entry name" value="Elong-fact-P_C"/>
    <property type="match status" value="1"/>
</dbReference>
<dbReference type="SUPFAM" id="SSF50249">
    <property type="entry name" value="Nucleic acid-binding proteins"/>
    <property type="match status" value="2"/>
</dbReference>
<dbReference type="SUPFAM" id="SSF50104">
    <property type="entry name" value="Translation proteins SH3-like domain"/>
    <property type="match status" value="1"/>
</dbReference>
<dbReference type="PROSITE" id="PS01275">
    <property type="entry name" value="EFP"/>
    <property type="match status" value="1"/>
</dbReference>
<protein>
    <recommendedName>
        <fullName evidence="1">Elongation factor P</fullName>
        <shortName evidence="1">EF-P</shortName>
    </recommendedName>
</protein>
<evidence type="ECO:0000255" key="1">
    <source>
        <dbReference type="HAMAP-Rule" id="MF_00141"/>
    </source>
</evidence>
<keyword id="KW-0963">Cytoplasm</keyword>
<keyword id="KW-0251">Elongation factor</keyword>
<keyword id="KW-0648">Protein biosynthesis</keyword>
<proteinExistence type="inferred from homology"/>
<reference key="1">
    <citation type="journal article" date="2006" name="Proc. Natl. Acad. Sci. U.S.A.">
        <title>Genome reduction in Leptospira borgpetersenii reflects limited transmission potential.</title>
        <authorList>
            <person name="Bulach D.M."/>
            <person name="Zuerner R.L."/>
            <person name="Wilson P."/>
            <person name="Seemann T."/>
            <person name="McGrath A."/>
            <person name="Cullen P.A."/>
            <person name="Davis J."/>
            <person name="Johnson M."/>
            <person name="Kuczek E."/>
            <person name="Alt D.P."/>
            <person name="Peterson-Burch B."/>
            <person name="Coppel R.L."/>
            <person name="Rood J.I."/>
            <person name="Davies J.K."/>
            <person name="Adler B."/>
        </authorList>
    </citation>
    <scope>NUCLEOTIDE SEQUENCE [LARGE SCALE GENOMIC DNA]</scope>
    <source>
        <strain>L550</strain>
    </source>
</reference>
<accession>Q04WK0</accession>
<organism>
    <name type="scientific">Leptospira borgpetersenii serovar Hardjo-bovis (strain L550)</name>
    <dbReference type="NCBI Taxonomy" id="355276"/>
    <lineage>
        <taxon>Bacteria</taxon>
        <taxon>Pseudomonadati</taxon>
        <taxon>Spirochaetota</taxon>
        <taxon>Spirochaetia</taxon>
        <taxon>Leptospirales</taxon>
        <taxon>Leptospiraceae</taxon>
        <taxon>Leptospira</taxon>
    </lineage>
</organism>
<sequence>MTLGITEVKKGMVLKVEGDLYSVVKTEFVNPGKGSAFIRTKLKNLTKNSSIERTFKAAEKLESVELEKRNMTICYTEGNDIIFMDSNDFEQMPVSKEYVEDILPFLKEETPMEVTFYEGKPIGVIPPNFSILEVTYAEEGLKGDTSGTAQKRVTVETGGEINVPIFVKQGDVIKIDLRDLTYVERVSR</sequence>
<gene>
    <name evidence="1" type="primary">efp</name>
    <name type="ordered locus">LBL_4234</name>
</gene>
<feature type="chain" id="PRO_1000010771" description="Elongation factor P">
    <location>
        <begin position="1"/>
        <end position="188"/>
    </location>
</feature>
<comment type="function">
    <text evidence="1">Involved in peptide bond synthesis. Stimulates efficient translation and peptide-bond synthesis on native or reconstituted 70S ribosomes in vitro. Probably functions indirectly by altering the affinity of the ribosome for aminoacyl-tRNA, thus increasing their reactivity as acceptors for peptidyl transferase.</text>
</comment>
<comment type="pathway">
    <text evidence="1">Protein biosynthesis; polypeptide chain elongation.</text>
</comment>
<comment type="subcellular location">
    <subcellularLocation>
        <location evidence="1">Cytoplasm</location>
    </subcellularLocation>
</comment>
<comment type="similarity">
    <text evidence="1">Belongs to the elongation factor P family.</text>
</comment>
<name>EFP_LEPBL</name>